<keyword id="KW-0408">Iron</keyword>
<keyword id="KW-1185">Reference proteome</keyword>
<dbReference type="EMBL" id="CP001614">
    <property type="protein sequence ID" value="ACR12807.1"/>
    <property type="molecule type" value="Genomic_DNA"/>
</dbReference>
<dbReference type="RefSeq" id="WP_015818919.1">
    <property type="nucleotide sequence ID" value="NC_012997.1"/>
</dbReference>
<dbReference type="SMR" id="C5BM93"/>
<dbReference type="STRING" id="377629.TERTU_0354"/>
<dbReference type="KEGG" id="ttu:TERTU_0354"/>
<dbReference type="eggNOG" id="COG2924">
    <property type="taxonomic scope" value="Bacteria"/>
</dbReference>
<dbReference type="HOGENOM" id="CLU_170994_0_0_6"/>
<dbReference type="OrthoDB" id="9804318at2"/>
<dbReference type="Proteomes" id="UP000009080">
    <property type="component" value="Chromosome"/>
</dbReference>
<dbReference type="GO" id="GO:0005829">
    <property type="term" value="C:cytosol"/>
    <property type="evidence" value="ECO:0007669"/>
    <property type="project" value="TreeGrafter"/>
</dbReference>
<dbReference type="GO" id="GO:0005506">
    <property type="term" value="F:iron ion binding"/>
    <property type="evidence" value="ECO:0007669"/>
    <property type="project" value="UniProtKB-UniRule"/>
</dbReference>
<dbReference type="GO" id="GO:0034599">
    <property type="term" value="P:cellular response to oxidative stress"/>
    <property type="evidence" value="ECO:0007669"/>
    <property type="project" value="TreeGrafter"/>
</dbReference>
<dbReference type="Gene3D" id="1.10.3880.10">
    <property type="entry name" value="Fe(II) trafficking protein YggX"/>
    <property type="match status" value="1"/>
</dbReference>
<dbReference type="HAMAP" id="MF_00686">
    <property type="entry name" value="Fe_traffic_YggX"/>
    <property type="match status" value="1"/>
</dbReference>
<dbReference type="InterPro" id="IPR007457">
    <property type="entry name" value="Fe_traffick_prot_YggX"/>
</dbReference>
<dbReference type="InterPro" id="IPR036766">
    <property type="entry name" value="Fe_traffick_prot_YggX_sf"/>
</dbReference>
<dbReference type="NCBIfam" id="NF003817">
    <property type="entry name" value="PRK05408.1"/>
    <property type="match status" value="1"/>
</dbReference>
<dbReference type="PANTHER" id="PTHR36965">
    <property type="entry name" value="FE(2+)-TRAFFICKING PROTEIN-RELATED"/>
    <property type="match status" value="1"/>
</dbReference>
<dbReference type="PANTHER" id="PTHR36965:SF1">
    <property type="entry name" value="FE(2+)-TRAFFICKING PROTEIN-RELATED"/>
    <property type="match status" value="1"/>
</dbReference>
<dbReference type="Pfam" id="PF04362">
    <property type="entry name" value="Iron_traffic"/>
    <property type="match status" value="1"/>
</dbReference>
<dbReference type="PIRSF" id="PIRSF029827">
    <property type="entry name" value="Fe_traffic_YggX"/>
    <property type="match status" value="1"/>
</dbReference>
<dbReference type="SUPFAM" id="SSF111148">
    <property type="entry name" value="YggX-like"/>
    <property type="match status" value="1"/>
</dbReference>
<protein>
    <recommendedName>
        <fullName evidence="1">Probable Fe(2+)-trafficking protein</fullName>
    </recommendedName>
</protein>
<comment type="function">
    <text evidence="1">Could be a mediator in iron transactions between iron acquisition and iron-requiring processes, such as synthesis and/or repair of Fe-S clusters in biosynthetic enzymes.</text>
</comment>
<comment type="similarity">
    <text evidence="1">Belongs to the Fe(2+)-trafficking protein family.</text>
</comment>
<name>FETP_TERTT</name>
<sequence>MTRTVHCRKYNKEMEGLAVPPLPGAKGTELFNSVSKQAWQEWLQHQTMLINEKQLNLMDLTARAYLTEQMEKFLSGADYDQADGYVPK</sequence>
<accession>C5BM93</accession>
<proteinExistence type="inferred from homology"/>
<organism>
    <name type="scientific">Teredinibacter turnerae (strain ATCC 39867 / T7901)</name>
    <dbReference type="NCBI Taxonomy" id="377629"/>
    <lineage>
        <taxon>Bacteria</taxon>
        <taxon>Pseudomonadati</taxon>
        <taxon>Pseudomonadota</taxon>
        <taxon>Gammaproteobacteria</taxon>
        <taxon>Cellvibrionales</taxon>
        <taxon>Cellvibrionaceae</taxon>
        <taxon>Teredinibacter</taxon>
    </lineage>
</organism>
<gene>
    <name type="ordered locus">TERTU_0354</name>
</gene>
<reference key="1">
    <citation type="journal article" date="2009" name="PLoS ONE">
        <title>The complete genome of Teredinibacter turnerae T7901: an intracellular endosymbiont of marine wood-boring bivalves (shipworms).</title>
        <authorList>
            <person name="Yang J.C."/>
            <person name="Madupu R."/>
            <person name="Durkin A.S."/>
            <person name="Ekborg N.A."/>
            <person name="Pedamallu C.S."/>
            <person name="Hostetler J.B."/>
            <person name="Radune D."/>
            <person name="Toms B.S."/>
            <person name="Henrissat B."/>
            <person name="Coutinho P.M."/>
            <person name="Schwarz S."/>
            <person name="Field L."/>
            <person name="Trindade-Silva A.E."/>
            <person name="Soares C.A.G."/>
            <person name="Elshahawi S."/>
            <person name="Hanora A."/>
            <person name="Schmidt E.W."/>
            <person name="Haygood M.G."/>
            <person name="Posfai J."/>
            <person name="Benner J."/>
            <person name="Madinger C."/>
            <person name="Nove J."/>
            <person name="Anton B."/>
            <person name="Chaudhary K."/>
            <person name="Foster J."/>
            <person name="Holman A."/>
            <person name="Kumar S."/>
            <person name="Lessard P.A."/>
            <person name="Luyten Y.A."/>
            <person name="Slatko B."/>
            <person name="Wood N."/>
            <person name="Wu B."/>
            <person name="Teplitski M."/>
            <person name="Mougous J.D."/>
            <person name="Ward N."/>
            <person name="Eisen J.A."/>
            <person name="Badger J.H."/>
            <person name="Distel D.L."/>
        </authorList>
    </citation>
    <scope>NUCLEOTIDE SEQUENCE [LARGE SCALE GENOMIC DNA]</scope>
    <source>
        <strain>ATCC 39867 / T7901</strain>
    </source>
</reference>
<evidence type="ECO:0000255" key="1">
    <source>
        <dbReference type="HAMAP-Rule" id="MF_00686"/>
    </source>
</evidence>
<feature type="chain" id="PRO_1000212557" description="Probable Fe(2+)-trafficking protein">
    <location>
        <begin position="1"/>
        <end position="88"/>
    </location>
</feature>